<geneLocation type="mitochondrion"/>
<evidence type="ECO:0000250" key="1"/>
<evidence type="ECO:0000250" key="2">
    <source>
        <dbReference type="UniProtKB" id="P00157"/>
    </source>
</evidence>
<evidence type="ECO:0000255" key="3">
    <source>
        <dbReference type="PROSITE-ProRule" id="PRU00967"/>
    </source>
</evidence>
<evidence type="ECO:0000255" key="4">
    <source>
        <dbReference type="PROSITE-ProRule" id="PRU00968"/>
    </source>
</evidence>
<evidence type="ECO:0000305" key="5"/>
<reference key="1">
    <citation type="journal article" date="2000" name="J. Mammal.">
        <title>Molecular systematics of a holarctic rodent (Microtus, Muridae).</title>
        <authorList>
            <person name="Conroy C.J."/>
            <person name="Cook J.A."/>
        </authorList>
    </citation>
    <scope>NUCLEOTIDE SEQUENCE [GENOMIC DNA]</scope>
</reference>
<reference key="2">
    <citation type="journal article" date="2004" name="Mol. Phylogenet. Evol.">
        <title>Molecular phylogeny of the speciose vole genus Microtus (Arvicolinae, Rodentia) inferred from mitochondrial DNA sequences.</title>
        <authorList>
            <person name="Jaarola M."/>
            <person name="Martinkova N."/>
            <person name="Gunduz I."/>
            <person name="Brunhoff C."/>
            <person name="Zima J."/>
            <person name="Nadachowski A."/>
            <person name="Amori G."/>
            <person name="Bulatova N.S."/>
            <person name="Chondropoulos B."/>
            <person name="Fraguedakis-Tsolis S."/>
            <person name="Gonzalez-Esteban J."/>
            <person name="Lopez-Fuster M.J."/>
            <person name="Kandaurov A.S."/>
            <person name="Kefelioglu H."/>
            <person name="Mathias M.L."/>
            <person name="Villate I."/>
            <person name="Searle J.B."/>
        </authorList>
    </citation>
    <scope>NUCLEOTIDE SEQUENCE [GENOMIC DNA]</scope>
</reference>
<protein>
    <recommendedName>
        <fullName>Cytochrome b</fullName>
    </recommendedName>
    <alternativeName>
        <fullName>Complex III subunit 3</fullName>
    </alternativeName>
    <alternativeName>
        <fullName>Complex III subunit III</fullName>
    </alternativeName>
    <alternativeName>
        <fullName>Cytochrome b-c1 complex subunit 3</fullName>
    </alternativeName>
    <alternativeName>
        <fullName>Ubiquinol-cytochrome-c reductase complex cytochrome b subunit</fullName>
    </alternativeName>
</protein>
<gene>
    <name type="primary">MT-CYB</name>
    <name type="synonym">COB</name>
    <name type="synonym">CYTB</name>
    <name type="synonym">MTCYB</name>
</gene>
<keyword id="KW-0249">Electron transport</keyword>
<keyword id="KW-0349">Heme</keyword>
<keyword id="KW-0408">Iron</keyword>
<keyword id="KW-0472">Membrane</keyword>
<keyword id="KW-0479">Metal-binding</keyword>
<keyword id="KW-0496">Mitochondrion</keyword>
<keyword id="KW-0999">Mitochondrion inner membrane</keyword>
<keyword id="KW-0679">Respiratory chain</keyword>
<keyword id="KW-0812">Transmembrane</keyword>
<keyword id="KW-1133">Transmembrane helix</keyword>
<keyword id="KW-0813">Transport</keyword>
<keyword id="KW-0830">Ubiquinone</keyword>
<organism>
    <name type="scientific">Stenocranius gregalis</name>
    <name type="common">Narrow-headed vole</name>
    <name type="synonym">Lasiopodomys gregalis</name>
    <dbReference type="NCBI Taxonomy" id="3371160"/>
    <lineage>
        <taxon>Eukaryota</taxon>
        <taxon>Metazoa</taxon>
        <taxon>Chordata</taxon>
        <taxon>Craniata</taxon>
        <taxon>Vertebrata</taxon>
        <taxon>Euteleostomi</taxon>
        <taxon>Mammalia</taxon>
        <taxon>Eutheria</taxon>
        <taxon>Euarchontoglires</taxon>
        <taxon>Glires</taxon>
        <taxon>Rodentia</taxon>
        <taxon>Myomorpha</taxon>
        <taxon>Muroidea</taxon>
        <taxon>Cricetidae</taxon>
        <taxon>Stenocranius</taxon>
    </lineage>
</organism>
<feature type="chain" id="PRO_0000255079" description="Cytochrome b">
    <location>
        <begin position="1"/>
        <end position="380"/>
    </location>
</feature>
<feature type="transmembrane region" description="Helical" evidence="2">
    <location>
        <begin position="33"/>
        <end position="53"/>
    </location>
</feature>
<feature type="transmembrane region" description="Helical" evidence="2">
    <location>
        <begin position="77"/>
        <end position="98"/>
    </location>
</feature>
<feature type="transmembrane region" description="Helical" evidence="2">
    <location>
        <begin position="113"/>
        <end position="133"/>
    </location>
</feature>
<feature type="transmembrane region" description="Helical" evidence="2">
    <location>
        <begin position="178"/>
        <end position="198"/>
    </location>
</feature>
<feature type="transmembrane region" description="Helical" evidence="2">
    <location>
        <begin position="226"/>
        <end position="246"/>
    </location>
</feature>
<feature type="transmembrane region" description="Helical" evidence="2">
    <location>
        <begin position="288"/>
        <end position="308"/>
    </location>
</feature>
<feature type="transmembrane region" description="Helical" evidence="2">
    <location>
        <begin position="320"/>
        <end position="340"/>
    </location>
</feature>
<feature type="transmembrane region" description="Helical" evidence="2">
    <location>
        <begin position="347"/>
        <end position="367"/>
    </location>
</feature>
<feature type="binding site" description="axial binding residue" evidence="2">
    <location>
        <position position="83"/>
    </location>
    <ligand>
        <name>heme b</name>
        <dbReference type="ChEBI" id="CHEBI:60344"/>
        <label>b562</label>
    </ligand>
    <ligandPart>
        <name>Fe</name>
        <dbReference type="ChEBI" id="CHEBI:18248"/>
    </ligandPart>
</feature>
<feature type="binding site" description="axial binding residue" evidence="2">
    <location>
        <position position="97"/>
    </location>
    <ligand>
        <name>heme b</name>
        <dbReference type="ChEBI" id="CHEBI:60344"/>
        <label>b566</label>
    </ligand>
    <ligandPart>
        <name>Fe</name>
        <dbReference type="ChEBI" id="CHEBI:18248"/>
    </ligandPart>
</feature>
<feature type="binding site" description="axial binding residue" evidence="2">
    <location>
        <position position="182"/>
    </location>
    <ligand>
        <name>heme b</name>
        <dbReference type="ChEBI" id="CHEBI:60344"/>
        <label>b562</label>
    </ligand>
    <ligandPart>
        <name>Fe</name>
        <dbReference type="ChEBI" id="CHEBI:18248"/>
    </ligandPart>
</feature>
<feature type="binding site" description="axial binding residue" evidence="2">
    <location>
        <position position="196"/>
    </location>
    <ligand>
        <name>heme b</name>
        <dbReference type="ChEBI" id="CHEBI:60344"/>
        <label>b566</label>
    </ligand>
    <ligandPart>
        <name>Fe</name>
        <dbReference type="ChEBI" id="CHEBI:18248"/>
    </ligandPart>
</feature>
<feature type="binding site" evidence="2">
    <location>
        <position position="201"/>
    </location>
    <ligand>
        <name>a ubiquinone</name>
        <dbReference type="ChEBI" id="CHEBI:16389"/>
    </ligand>
</feature>
<feature type="sequence conflict" description="In Ref. 1; AAF97419." evidence="5" ref="1">
    <original>T</original>
    <variation>A</variation>
    <location>
        <position position="23"/>
    </location>
</feature>
<proteinExistence type="inferred from homology"/>
<sequence length="380" mass="42852">MTIMRKTHPLVKIINHSFIDLPTPSNISSWWNFGSLLGLCLVVQILTGLFLAMHYTSDTSTAFSSVAHICRDVNYGWLIRYMHANGASMFFICLFLHVGRGIYYGSYNMIETWNMGIILLFAVMATAFMGYVLPWGQMSFWGATVITNLLSAIPYIGSTLVEWIWGGFSVDKATLTRFFAFHFILPFIITALVMVHLLFLHETGSNNPTGLNSDADKIPFHPYYTIKDFLGVLMLLMTFMVLVLFLPDILGDPDNYTPANPLNTPPHIKPEWYFLFAYAILRSIPNKLGGVLALILSILVLALMPLLHTSKQRTLAFRPITQTMYWILVADLLILTWIGGQPVEYPFIIIGQTASIAYFTIIVILMPMAGMIENNILNLD</sequence>
<comment type="function">
    <text evidence="2">Component of the ubiquinol-cytochrome c reductase complex (complex III or cytochrome b-c1 complex) that is part of the mitochondrial respiratory chain. The b-c1 complex mediates electron transfer from ubiquinol to cytochrome c. Contributes to the generation of a proton gradient across the mitochondrial membrane that is then used for ATP synthesis.</text>
</comment>
<comment type="cofactor">
    <cofactor evidence="2">
        <name>heme b</name>
        <dbReference type="ChEBI" id="CHEBI:60344"/>
    </cofactor>
    <text evidence="2">Binds 2 heme b groups non-covalently.</text>
</comment>
<comment type="subunit">
    <text evidence="2">The cytochrome bc1 complex contains 11 subunits: 3 respiratory subunits (MT-CYB, CYC1 and UQCRFS1), 2 core proteins (UQCRC1 and UQCRC2) and 6 low-molecular weight proteins (UQCRH/QCR6, UQCRB/QCR7, UQCRQ/QCR8, UQCR10/QCR9, UQCR11/QCR10 and a cleavage product of UQCRFS1). This cytochrome bc1 complex then forms a dimer.</text>
</comment>
<comment type="subcellular location">
    <subcellularLocation>
        <location evidence="2">Mitochondrion inner membrane</location>
        <topology evidence="2">Multi-pass membrane protein</topology>
    </subcellularLocation>
</comment>
<comment type="miscellaneous">
    <text evidence="1">Heme 1 (or BL or b562) is low-potential and absorbs at about 562 nm, and heme 2 (or BH or b566) is high-potential and absorbs at about 566 nm.</text>
</comment>
<comment type="similarity">
    <text evidence="3 4">Belongs to the cytochrome b family.</text>
</comment>
<comment type="caution">
    <text evidence="2">The full-length protein contains only eight transmembrane helices, not nine as predicted by bioinformatics tools.</text>
</comment>
<dbReference type="EMBL" id="AF163895">
    <property type="protein sequence ID" value="AAF97419.1"/>
    <property type="molecule type" value="Genomic_DNA"/>
</dbReference>
<dbReference type="EMBL" id="AY513803">
    <property type="protein sequence ID" value="AAS82795.1"/>
    <property type="molecule type" value="Genomic_DNA"/>
</dbReference>
<dbReference type="SMR" id="Q6JDT3"/>
<dbReference type="GO" id="GO:0005743">
    <property type="term" value="C:mitochondrial inner membrane"/>
    <property type="evidence" value="ECO:0007669"/>
    <property type="project" value="UniProtKB-SubCell"/>
</dbReference>
<dbReference type="GO" id="GO:0045275">
    <property type="term" value="C:respiratory chain complex III"/>
    <property type="evidence" value="ECO:0007669"/>
    <property type="project" value="InterPro"/>
</dbReference>
<dbReference type="GO" id="GO:0046872">
    <property type="term" value="F:metal ion binding"/>
    <property type="evidence" value="ECO:0007669"/>
    <property type="project" value="UniProtKB-KW"/>
</dbReference>
<dbReference type="GO" id="GO:0008121">
    <property type="term" value="F:ubiquinol-cytochrome-c reductase activity"/>
    <property type="evidence" value="ECO:0007669"/>
    <property type="project" value="InterPro"/>
</dbReference>
<dbReference type="GO" id="GO:0006122">
    <property type="term" value="P:mitochondrial electron transport, ubiquinol to cytochrome c"/>
    <property type="evidence" value="ECO:0007669"/>
    <property type="project" value="TreeGrafter"/>
</dbReference>
<dbReference type="CDD" id="cd00290">
    <property type="entry name" value="cytochrome_b_C"/>
    <property type="match status" value="1"/>
</dbReference>
<dbReference type="CDD" id="cd00284">
    <property type="entry name" value="Cytochrome_b_N"/>
    <property type="match status" value="1"/>
</dbReference>
<dbReference type="FunFam" id="1.20.810.10:FF:000002">
    <property type="entry name" value="Cytochrome b"/>
    <property type="match status" value="1"/>
</dbReference>
<dbReference type="Gene3D" id="1.20.810.10">
    <property type="entry name" value="Cytochrome Bc1 Complex, Chain C"/>
    <property type="match status" value="1"/>
</dbReference>
<dbReference type="InterPro" id="IPR005798">
    <property type="entry name" value="Cyt_b/b6_C"/>
</dbReference>
<dbReference type="InterPro" id="IPR036150">
    <property type="entry name" value="Cyt_b/b6_C_sf"/>
</dbReference>
<dbReference type="InterPro" id="IPR005797">
    <property type="entry name" value="Cyt_b/b6_N"/>
</dbReference>
<dbReference type="InterPro" id="IPR027387">
    <property type="entry name" value="Cytb/b6-like_sf"/>
</dbReference>
<dbReference type="InterPro" id="IPR030689">
    <property type="entry name" value="Cytochrome_b"/>
</dbReference>
<dbReference type="InterPro" id="IPR048260">
    <property type="entry name" value="Cytochrome_b_C_euk/bac"/>
</dbReference>
<dbReference type="InterPro" id="IPR048259">
    <property type="entry name" value="Cytochrome_b_N_euk/bac"/>
</dbReference>
<dbReference type="InterPro" id="IPR016174">
    <property type="entry name" value="Di-haem_cyt_TM"/>
</dbReference>
<dbReference type="PANTHER" id="PTHR19271">
    <property type="entry name" value="CYTOCHROME B"/>
    <property type="match status" value="1"/>
</dbReference>
<dbReference type="PANTHER" id="PTHR19271:SF16">
    <property type="entry name" value="CYTOCHROME B"/>
    <property type="match status" value="1"/>
</dbReference>
<dbReference type="Pfam" id="PF00032">
    <property type="entry name" value="Cytochrom_B_C"/>
    <property type="match status" value="1"/>
</dbReference>
<dbReference type="Pfam" id="PF00033">
    <property type="entry name" value="Cytochrome_B"/>
    <property type="match status" value="1"/>
</dbReference>
<dbReference type="PIRSF" id="PIRSF038885">
    <property type="entry name" value="COB"/>
    <property type="match status" value="1"/>
</dbReference>
<dbReference type="SUPFAM" id="SSF81648">
    <property type="entry name" value="a domain/subunit of cytochrome bc1 complex (Ubiquinol-cytochrome c reductase)"/>
    <property type="match status" value="1"/>
</dbReference>
<dbReference type="SUPFAM" id="SSF81342">
    <property type="entry name" value="Transmembrane di-heme cytochromes"/>
    <property type="match status" value="1"/>
</dbReference>
<dbReference type="PROSITE" id="PS51003">
    <property type="entry name" value="CYTB_CTER"/>
    <property type="match status" value="1"/>
</dbReference>
<dbReference type="PROSITE" id="PS51002">
    <property type="entry name" value="CYTB_NTER"/>
    <property type="match status" value="1"/>
</dbReference>
<accession>Q6JDT3</accession>
<accession>Q9MI34</accession>
<name>CYB_STEGE</name>